<dbReference type="EC" id="4.2.1.109" evidence="1"/>
<dbReference type="EMBL" id="BT074690">
    <property type="protein sequence ID" value="ACO09114.1"/>
    <property type="molecule type" value="mRNA"/>
</dbReference>
<dbReference type="RefSeq" id="XP_067105153.1">
    <property type="nucleotide sequence ID" value="XM_067249052.1"/>
</dbReference>
<dbReference type="SMR" id="C1BJB1"/>
<dbReference type="GeneID" id="136955364"/>
<dbReference type="UniPathway" id="UPA00904">
    <property type="reaction ID" value="UER00875"/>
</dbReference>
<dbReference type="GO" id="GO:0005737">
    <property type="term" value="C:cytoplasm"/>
    <property type="evidence" value="ECO:0007669"/>
    <property type="project" value="UniProtKB-SubCell"/>
</dbReference>
<dbReference type="GO" id="GO:0046570">
    <property type="term" value="F:methylthioribulose 1-phosphate dehydratase activity"/>
    <property type="evidence" value="ECO:0000250"/>
    <property type="project" value="UniProtKB"/>
</dbReference>
<dbReference type="GO" id="GO:0008270">
    <property type="term" value="F:zinc ion binding"/>
    <property type="evidence" value="ECO:0000250"/>
    <property type="project" value="UniProtKB"/>
</dbReference>
<dbReference type="GO" id="GO:0006915">
    <property type="term" value="P:apoptotic process"/>
    <property type="evidence" value="ECO:0007669"/>
    <property type="project" value="UniProtKB-KW"/>
</dbReference>
<dbReference type="GO" id="GO:0019509">
    <property type="term" value="P:L-methionine salvage from methylthioadenosine"/>
    <property type="evidence" value="ECO:0000250"/>
    <property type="project" value="UniProtKB"/>
</dbReference>
<dbReference type="FunFam" id="3.40.225.10:FF:000003">
    <property type="entry name" value="Methylthioribulose-1-phosphate dehydratase"/>
    <property type="match status" value="1"/>
</dbReference>
<dbReference type="Gene3D" id="3.40.225.10">
    <property type="entry name" value="Class II aldolase/adducin N-terminal domain"/>
    <property type="match status" value="1"/>
</dbReference>
<dbReference type="HAMAP" id="MF_03116">
    <property type="entry name" value="Salvage_MtnB_euk"/>
    <property type="match status" value="1"/>
</dbReference>
<dbReference type="InterPro" id="IPR001303">
    <property type="entry name" value="Aldolase_II/adducin_N"/>
</dbReference>
<dbReference type="InterPro" id="IPR036409">
    <property type="entry name" value="Aldolase_II/adducin_N_sf"/>
</dbReference>
<dbReference type="InterPro" id="IPR017714">
    <property type="entry name" value="MethylthioRu-1-P_deHdtase_MtnB"/>
</dbReference>
<dbReference type="InterPro" id="IPR027514">
    <property type="entry name" value="Salvage_MtnB_euk"/>
</dbReference>
<dbReference type="NCBIfam" id="TIGR03328">
    <property type="entry name" value="salvage_mtnB"/>
    <property type="match status" value="1"/>
</dbReference>
<dbReference type="PANTHER" id="PTHR10640">
    <property type="entry name" value="METHYLTHIORIBULOSE-1-PHOSPHATE DEHYDRATASE"/>
    <property type="match status" value="1"/>
</dbReference>
<dbReference type="PANTHER" id="PTHR10640:SF7">
    <property type="entry name" value="METHYLTHIORIBULOSE-1-PHOSPHATE DEHYDRATASE"/>
    <property type="match status" value="1"/>
</dbReference>
<dbReference type="Pfam" id="PF00596">
    <property type="entry name" value="Aldolase_II"/>
    <property type="match status" value="1"/>
</dbReference>
<dbReference type="SMART" id="SM01007">
    <property type="entry name" value="Aldolase_II"/>
    <property type="match status" value="1"/>
</dbReference>
<dbReference type="SUPFAM" id="SSF53639">
    <property type="entry name" value="AraD/HMP-PK domain-like"/>
    <property type="match status" value="1"/>
</dbReference>
<organism>
    <name type="scientific">Osmerus mordax</name>
    <name type="common">Rainbow smelt</name>
    <name type="synonym">Atherina mordax</name>
    <dbReference type="NCBI Taxonomy" id="8014"/>
    <lineage>
        <taxon>Eukaryota</taxon>
        <taxon>Metazoa</taxon>
        <taxon>Chordata</taxon>
        <taxon>Craniata</taxon>
        <taxon>Vertebrata</taxon>
        <taxon>Euteleostomi</taxon>
        <taxon>Actinopterygii</taxon>
        <taxon>Neopterygii</taxon>
        <taxon>Teleostei</taxon>
        <taxon>Stomiati</taxon>
        <taxon>Osmeriformes</taxon>
        <taxon>Osmeridae</taxon>
        <taxon>Osmerus</taxon>
    </lineage>
</organism>
<gene>
    <name evidence="1" type="primary">apip</name>
</gene>
<accession>C1BJB1</accession>
<comment type="function">
    <text evidence="1">Catalyzes the dehydration of methylthioribulose-1-phosphate (MTRu-1-P) into 2,3-diketo-5-methylthiopentyl-1-phosphate (DK-MTP-1-P). Functions in the methionine salvage pathway. May play a role in apoptosis.</text>
</comment>
<comment type="catalytic activity">
    <reaction evidence="1">
        <text>5-(methylsulfanyl)-D-ribulose 1-phosphate = 5-methylsulfanyl-2,3-dioxopentyl phosphate + H2O</text>
        <dbReference type="Rhea" id="RHEA:15549"/>
        <dbReference type="ChEBI" id="CHEBI:15377"/>
        <dbReference type="ChEBI" id="CHEBI:58548"/>
        <dbReference type="ChEBI" id="CHEBI:58828"/>
        <dbReference type="EC" id="4.2.1.109"/>
    </reaction>
</comment>
<comment type="cofactor">
    <cofactor evidence="1">
        <name>Zn(2+)</name>
        <dbReference type="ChEBI" id="CHEBI:29105"/>
    </cofactor>
    <text evidence="1">Binds 1 zinc ion per subunit.</text>
</comment>
<comment type="pathway">
    <text evidence="1">Amino-acid biosynthesis; L-methionine biosynthesis via salvage pathway; L-methionine from S-methyl-5-thio-alpha-D-ribose 1-phosphate: step 2/6.</text>
</comment>
<comment type="subcellular location">
    <subcellularLocation>
        <location evidence="1">Cytoplasm</location>
    </subcellularLocation>
</comment>
<comment type="similarity">
    <text evidence="1">Belongs to the aldolase class II family. MtnB subfamily.</text>
</comment>
<evidence type="ECO:0000255" key="1">
    <source>
        <dbReference type="HAMAP-Rule" id="MF_03116"/>
    </source>
</evidence>
<evidence type="ECO:0000256" key="2">
    <source>
        <dbReference type="SAM" id="MobiDB-lite"/>
    </source>
</evidence>
<name>MTNB_OSMMO</name>
<feature type="chain" id="PRO_0000393774" description="Methylthioribulose-1-phosphate dehydratase">
    <location>
        <begin position="1"/>
        <end position="241"/>
    </location>
</feature>
<feature type="region of interest" description="Disordered" evidence="2">
    <location>
        <begin position="1"/>
        <end position="20"/>
    </location>
</feature>
<feature type="compositionally biased region" description="Polar residues" evidence="2">
    <location>
        <begin position="1"/>
        <end position="11"/>
    </location>
</feature>
<feature type="active site" description="Proton donor/acceptor" evidence="1">
    <location>
        <position position="138"/>
    </location>
</feature>
<feature type="binding site" evidence="1">
    <location>
        <position position="96"/>
    </location>
    <ligand>
        <name>substrate</name>
    </ligand>
</feature>
<feature type="binding site" evidence="1">
    <location>
        <position position="114"/>
    </location>
    <ligand>
        <name>Zn(2+)</name>
        <dbReference type="ChEBI" id="CHEBI:29105"/>
    </ligand>
</feature>
<feature type="binding site" evidence="1">
    <location>
        <position position="116"/>
    </location>
    <ligand>
        <name>Zn(2+)</name>
        <dbReference type="ChEBI" id="CHEBI:29105"/>
    </ligand>
</feature>
<feature type="binding site" evidence="1">
    <location>
        <position position="194"/>
    </location>
    <ligand>
        <name>Zn(2+)</name>
        <dbReference type="ChEBI" id="CHEBI:29105"/>
    </ligand>
</feature>
<sequence length="241" mass="27267">MSSLCDTSNGESHADPCQDKEHPRMLIPELCRLFYQLGWVTGTGGGISLRHGDQIYIAPSGVQKERIQPEDMFVCDVAERDISSPPAWKKLRKSQCTPLFMNAYTMRAAQAVIHTHSKAAVMATLLYPGKEFRITHQEMIKGIRKGNSGTNYRYNDTLVVPIIENTPEEQDLKERMALAMEEYPEACAVLVRRHGVYVWGETWEKAKTMCECYDYLFDIAVQMKQCGLDPSAVPSEEIDIV</sequence>
<reference key="1">
    <citation type="submission" date="2009-03" db="EMBL/GenBank/DDBJ databases">
        <title>Osmerus mordax full-length cDNAs.</title>
        <authorList>
            <person name="von Schalburg K."/>
            <person name="Leong J."/>
            <person name="Cooper G."/>
            <person name="Davidson W.S."/>
            <person name="Koop B.F."/>
        </authorList>
    </citation>
    <scope>NUCLEOTIDE SEQUENCE [LARGE SCALE MRNA]</scope>
    <source>
        <tissue>Brain</tissue>
    </source>
</reference>
<proteinExistence type="evidence at transcript level"/>
<keyword id="KW-0028">Amino-acid biosynthesis</keyword>
<keyword id="KW-0053">Apoptosis</keyword>
<keyword id="KW-0963">Cytoplasm</keyword>
<keyword id="KW-0456">Lyase</keyword>
<keyword id="KW-0479">Metal-binding</keyword>
<keyword id="KW-0486">Methionine biosynthesis</keyword>
<keyword id="KW-0862">Zinc</keyword>
<protein>
    <recommendedName>
        <fullName evidence="1">Methylthioribulose-1-phosphate dehydratase</fullName>
        <shortName evidence="1">MTRu-1-P dehydratase</shortName>
        <ecNumber evidence="1">4.2.1.109</ecNumber>
    </recommendedName>
    <alternativeName>
        <fullName evidence="1">APAF1-interacting protein homolog</fullName>
    </alternativeName>
</protein>